<feature type="chain" id="PRO_0000386160" description="GTPase Obg">
    <location>
        <begin position="1"/>
        <end position="408"/>
    </location>
</feature>
<feature type="domain" description="Obg" evidence="2">
    <location>
        <begin position="1"/>
        <end position="159"/>
    </location>
</feature>
<feature type="domain" description="OBG-type G" evidence="1">
    <location>
        <begin position="160"/>
        <end position="333"/>
    </location>
</feature>
<feature type="region of interest" description="Disordered" evidence="3">
    <location>
        <begin position="127"/>
        <end position="148"/>
    </location>
</feature>
<feature type="region of interest" description="Disordered" evidence="3">
    <location>
        <begin position="385"/>
        <end position="408"/>
    </location>
</feature>
<feature type="compositionally biased region" description="Polar residues" evidence="3">
    <location>
        <begin position="129"/>
        <end position="143"/>
    </location>
</feature>
<feature type="compositionally biased region" description="Acidic residues" evidence="3">
    <location>
        <begin position="385"/>
        <end position="401"/>
    </location>
</feature>
<feature type="binding site" evidence="1">
    <location>
        <begin position="166"/>
        <end position="173"/>
    </location>
    <ligand>
        <name>GTP</name>
        <dbReference type="ChEBI" id="CHEBI:37565"/>
    </ligand>
</feature>
<feature type="binding site" evidence="1">
    <location>
        <position position="173"/>
    </location>
    <ligand>
        <name>Mg(2+)</name>
        <dbReference type="ChEBI" id="CHEBI:18420"/>
    </ligand>
</feature>
<feature type="binding site" evidence="1">
    <location>
        <begin position="191"/>
        <end position="195"/>
    </location>
    <ligand>
        <name>GTP</name>
        <dbReference type="ChEBI" id="CHEBI:37565"/>
    </ligand>
</feature>
<feature type="binding site" evidence="1">
    <location>
        <position position="193"/>
    </location>
    <ligand>
        <name>Mg(2+)</name>
        <dbReference type="ChEBI" id="CHEBI:18420"/>
    </ligand>
</feature>
<feature type="binding site" evidence="1">
    <location>
        <begin position="213"/>
        <end position="216"/>
    </location>
    <ligand>
        <name>GTP</name>
        <dbReference type="ChEBI" id="CHEBI:37565"/>
    </ligand>
</feature>
<feature type="binding site" evidence="1">
    <location>
        <begin position="283"/>
        <end position="286"/>
    </location>
    <ligand>
        <name>GTP</name>
        <dbReference type="ChEBI" id="CHEBI:37565"/>
    </ligand>
</feature>
<feature type="binding site" evidence="1">
    <location>
        <begin position="314"/>
        <end position="316"/>
    </location>
    <ligand>
        <name>GTP</name>
        <dbReference type="ChEBI" id="CHEBI:37565"/>
    </ligand>
</feature>
<organism>
    <name type="scientific">Pseudomonas putida (strain ATCC 47054 / DSM 6125 / CFBP 8728 / NCIMB 11950 / KT2440)</name>
    <dbReference type="NCBI Taxonomy" id="160488"/>
    <lineage>
        <taxon>Bacteria</taxon>
        <taxon>Pseudomonadati</taxon>
        <taxon>Pseudomonadota</taxon>
        <taxon>Gammaproteobacteria</taxon>
        <taxon>Pseudomonadales</taxon>
        <taxon>Pseudomonadaceae</taxon>
        <taxon>Pseudomonas</taxon>
    </lineage>
</organism>
<keyword id="KW-0963">Cytoplasm</keyword>
<keyword id="KW-0342">GTP-binding</keyword>
<keyword id="KW-0378">Hydrolase</keyword>
<keyword id="KW-0460">Magnesium</keyword>
<keyword id="KW-0479">Metal-binding</keyword>
<keyword id="KW-0547">Nucleotide-binding</keyword>
<keyword id="KW-1185">Reference proteome</keyword>
<name>OBG_PSEPK</name>
<reference key="1">
    <citation type="journal article" date="2002" name="Environ. Microbiol.">
        <title>Complete genome sequence and comparative analysis of the metabolically versatile Pseudomonas putida KT2440.</title>
        <authorList>
            <person name="Nelson K.E."/>
            <person name="Weinel C."/>
            <person name="Paulsen I.T."/>
            <person name="Dodson R.J."/>
            <person name="Hilbert H."/>
            <person name="Martins dos Santos V.A.P."/>
            <person name="Fouts D.E."/>
            <person name="Gill S.R."/>
            <person name="Pop M."/>
            <person name="Holmes M."/>
            <person name="Brinkac L.M."/>
            <person name="Beanan M.J."/>
            <person name="DeBoy R.T."/>
            <person name="Daugherty S.C."/>
            <person name="Kolonay J.F."/>
            <person name="Madupu R."/>
            <person name="Nelson W.C."/>
            <person name="White O."/>
            <person name="Peterson J.D."/>
            <person name="Khouri H.M."/>
            <person name="Hance I."/>
            <person name="Chris Lee P."/>
            <person name="Holtzapple E.K."/>
            <person name="Scanlan D."/>
            <person name="Tran K."/>
            <person name="Moazzez A."/>
            <person name="Utterback T.R."/>
            <person name="Rizzo M."/>
            <person name="Lee K."/>
            <person name="Kosack D."/>
            <person name="Moestl D."/>
            <person name="Wedler H."/>
            <person name="Lauber J."/>
            <person name="Stjepandic D."/>
            <person name="Hoheisel J."/>
            <person name="Straetz M."/>
            <person name="Heim S."/>
            <person name="Kiewitz C."/>
            <person name="Eisen J.A."/>
            <person name="Timmis K.N."/>
            <person name="Duesterhoeft A."/>
            <person name="Tuemmler B."/>
            <person name="Fraser C.M."/>
        </authorList>
    </citation>
    <scope>NUCLEOTIDE SEQUENCE [LARGE SCALE GENOMIC DNA]</scope>
    <source>
        <strain>ATCC 47054 / DSM 6125 / CFBP 8728 / NCIMB 11950 / KT2440</strain>
    </source>
</reference>
<evidence type="ECO:0000255" key="1">
    <source>
        <dbReference type="HAMAP-Rule" id="MF_01454"/>
    </source>
</evidence>
<evidence type="ECO:0000255" key="2">
    <source>
        <dbReference type="PROSITE-ProRule" id="PRU01231"/>
    </source>
</evidence>
<evidence type="ECO:0000256" key="3">
    <source>
        <dbReference type="SAM" id="MobiDB-lite"/>
    </source>
</evidence>
<protein>
    <recommendedName>
        <fullName evidence="1">GTPase Obg</fullName>
        <ecNumber evidence="1">3.6.5.-</ecNumber>
    </recommendedName>
    <alternativeName>
        <fullName evidence="1">GTP-binding protein Obg</fullName>
    </alternativeName>
</protein>
<accession>Q88Q08</accession>
<sequence length="408" mass="44825">MKFVDEVSIRVKAGDGGNGCMSFRREKFIENGGPNGGDGGDGGSVYMIADENLNTLVDYRYTRHHEAQRGSNGGSTDCTGKKGEDLFLRVPVGTTVIDASTQEVIGDLVTPGQKLMVAQGGWHGLGNTRFKSSTNRAPRQTTPGKPGEQRDLKMEMKVLADVGLLGLPNAGKSTFIRSVSAAKPKVADYPFTTLVPNLGVVSVDRWKSFVIADIPGLIEGASEGAGLGIRFLKHLARTRVLLHLVDIAPLDESSPADAAEVIVNELTRFSPSLAERERWLVLNKADMVMDDERDERVQEVIDRLEWEGPVYVISAISKQGTDKLSHDLMRYLEDRADRLANDPAYAEELADLDQRIEDEARAQLQALDDARTLRRTGVKSVHDIGDDDGWDDDFEDDEDGPEIIYVRD</sequence>
<dbReference type="EC" id="3.6.5.-" evidence="1"/>
<dbReference type="EMBL" id="AE015451">
    <property type="protein sequence ID" value="AAN66315.1"/>
    <property type="molecule type" value="Genomic_DNA"/>
</dbReference>
<dbReference type="RefSeq" id="NP_742851.1">
    <property type="nucleotide sequence ID" value="NC_002947.4"/>
</dbReference>
<dbReference type="SMR" id="Q88Q08"/>
<dbReference type="STRING" id="160488.PP_0690"/>
<dbReference type="PaxDb" id="160488-PP_0690"/>
<dbReference type="KEGG" id="ppu:PP_0690"/>
<dbReference type="PATRIC" id="fig|160488.4.peg.738"/>
<dbReference type="eggNOG" id="COG0536">
    <property type="taxonomic scope" value="Bacteria"/>
</dbReference>
<dbReference type="HOGENOM" id="CLU_011747_2_0_6"/>
<dbReference type="OrthoDB" id="9807318at2"/>
<dbReference type="PhylomeDB" id="Q88Q08"/>
<dbReference type="BioCyc" id="PPUT160488:G1G01-762-MONOMER"/>
<dbReference type="Proteomes" id="UP000000556">
    <property type="component" value="Chromosome"/>
</dbReference>
<dbReference type="GO" id="GO:0005737">
    <property type="term" value="C:cytoplasm"/>
    <property type="evidence" value="ECO:0007669"/>
    <property type="project" value="UniProtKB-SubCell"/>
</dbReference>
<dbReference type="GO" id="GO:0005525">
    <property type="term" value="F:GTP binding"/>
    <property type="evidence" value="ECO:0007669"/>
    <property type="project" value="UniProtKB-UniRule"/>
</dbReference>
<dbReference type="GO" id="GO:0003924">
    <property type="term" value="F:GTPase activity"/>
    <property type="evidence" value="ECO:0007669"/>
    <property type="project" value="UniProtKB-UniRule"/>
</dbReference>
<dbReference type="GO" id="GO:0000287">
    <property type="term" value="F:magnesium ion binding"/>
    <property type="evidence" value="ECO:0007669"/>
    <property type="project" value="InterPro"/>
</dbReference>
<dbReference type="GO" id="GO:0042254">
    <property type="term" value="P:ribosome biogenesis"/>
    <property type="evidence" value="ECO:0007669"/>
    <property type="project" value="UniProtKB-UniRule"/>
</dbReference>
<dbReference type="CDD" id="cd01898">
    <property type="entry name" value="Obg"/>
    <property type="match status" value="1"/>
</dbReference>
<dbReference type="FunFam" id="2.70.210.12:FF:000001">
    <property type="entry name" value="GTPase Obg"/>
    <property type="match status" value="1"/>
</dbReference>
<dbReference type="FunFam" id="3.40.50.300:FF:000185">
    <property type="entry name" value="GTPase Obg"/>
    <property type="match status" value="1"/>
</dbReference>
<dbReference type="Gene3D" id="2.70.210.12">
    <property type="entry name" value="GTP1/OBG domain"/>
    <property type="match status" value="1"/>
</dbReference>
<dbReference type="Gene3D" id="3.40.50.300">
    <property type="entry name" value="P-loop containing nucleotide triphosphate hydrolases"/>
    <property type="match status" value="1"/>
</dbReference>
<dbReference type="HAMAP" id="MF_01454">
    <property type="entry name" value="GTPase_Obg"/>
    <property type="match status" value="1"/>
</dbReference>
<dbReference type="InterPro" id="IPR031167">
    <property type="entry name" value="G_OBG"/>
</dbReference>
<dbReference type="InterPro" id="IPR006073">
    <property type="entry name" value="GTP-bd"/>
</dbReference>
<dbReference type="InterPro" id="IPR014100">
    <property type="entry name" value="GTP-bd_Obg/CgtA"/>
</dbReference>
<dbReference type="InterPro" id="IPR006074">
    <property type="entry name" value="GTP1-OBG_CS"/>
</dbReference>
<dbReference type="InterPro" id="IPR006169">
    <property type="entry name" value="GTP1_OBG_dom"/>
</dbReference>
<dbReference type="InterPro" id="IPR036726">
    <property type="entry name" value="GTP1_OBG_dom_sf"/>
</dbReference>
<dbReference type="InterPro" id="IPR045086">
    <property type="entry name" value="OBG_GTPase"/>
</dbReference>
<dbReference type="InterPro" id="IPR027417">
    <property type="entry name" value="P-loop_NTPase"/>
</dbReference>
<dbReference type="NCBIfam" id="TIGR02729">
    <property type="entry name" value="Obg_CgtA"/>
    <property type="match status" value="1"/>
</dbReference>
<dbReference type="NCBIfam" id="NF008955">
    <property type="entry name" value="PRK12297.1"/>
    <property type="match status" value="1"/>
</dbReference>
<dbReference type="NCBIfam" id="NF008956">
    <property type="entry name" value="PRK12299.1"/>
    <property type="match status" value="1"/>
</dbReference>
<dbReference type="PANTHER" id="PTHR11702">
    <property type="entry name" value="DEVELOPMENTALLY REGULATED GTP-BINDING PROTEIN-RELATED"/>
    <property type="match status" value="1"/>
</dbReference>
<dbReference type="PANTHER" id="PTHR11702:SF31">
    <property type="entry name" value="MITOCHONDRIAL RIBOSOME-ASSOCIATED GTPASE 2"/>
    <property type="match status" value="1"/>
</dbReference>
<dbReference type="Pfam" id="PF01018">
    <property type="entry name" value="GTP1_OBG"/>
    <property type="match status" value="1"/>
</dbReference>
<dbReference type="Pfam" id="PF01926">
    <property type="entry name" value="MMR_HSR1"/>
    <property type="match status" value="1"/>
</dbReference>
<dbReference type="PIRSF" id="PIRSF002401">
    <property type="entry name" value="GTP_bd_Obg/CgtA"/>
    <property type="match status" value="1"/>
</dbReference>
<dbReference type="PRINTS" id="PR00326">
    <property type="entry name" value="GTP1OBG"/>
</dbReference>
<dbReference type="SUPFAM" id="SSF82051">
    <property type="entry name" value="Obg GTP-binding protein N-terminal domain"/>
    <property type="match status" value="1"/>
</dbReference>
<dbReference type="SUPFAM" id="SSF52540">
    <property type="entry name" value="P-loop containing nucleoside triphosphate hydrolases"/>
    <property type="match status" value="1"/>
</dbReference>
<dbReference type="PROSITE" id="PS51710">
    <property type="entry name" value="G_OBG"/>
    <property type="match status" value="1"/>
</dbReference>
<dbReference type="PROSITE" id="PS00905">
    <property type="entry name" value="GTP1_OBG"/>
    <property type="match status" value="1"/>
</dbReference>
<dbReference type="PROSITE" id="PS51883">
    <property type="entry name" value="OBG"/>
    <property type="match status" value="1"/>
</dbReference>
<proteinExistence type="inferred from homology"/>
<gene>
    <name evidence="1" type="primary">obg</name>
    <name type="ordered locus">PP_0690</name>
</gene>
<comment type="function">
    <text evidence="1">An essential GTPase which binds GTP, GDP and possibly (p)ppGpp with moderate affinity, with high nucleotide exchange rates and a fairly low GTP hydrolysis rate. Plays a role in control of the cell cycle, stress response, ribosome biogenesis and in those bacteria that undergo differentiation, in morphogenesis control.</text>
</comment>
<comment type="cofactor">
    <cofactor evidence="1">
        <name>Mg(2+)</name>
        <dbReference type="ChEBI" id="CHEBI:18420"/>
    </cofactor>
</comment>
<comment type="subunit">
    <text evidence="1">Monomer.</text>
</comment>
<comment type="subcellular location">
    <subcellularLocation>
        <location evidence="1">Cytoplasm</location>
    </subcellularLocation>
</comment>
<comment type="similarity">
    <text evidence="1">Belongs to the TRAFAC class OBG-HflX-like GTPase superfamily. OBG GTPase family.</text>
</comment>